<dbReference type="EC" id="2.7.7.101" evidence="1"/>
<dbReference type="EMBL" id="BX571856">
    <property type="protein sequence ID" value="CAG40634.1"/>
    <property type="molecule type" value="Genomic_DNA"/>
</dbReference>
<dbReference type="RefSeq" id="WP_001217253.1">
    <property type="nucleotide sequence ID" value="NC_002952.2"/>
</dbReference>
<dbReference type="SMR" id="Q6GGD7"/>
<dbReference type="KEGG" id="sar:SAR1639"/>
<dbReference type="HOGENOM" id="CLU_013501_3_3_9"/>
<dbReference type="Proteomes" id="UP000000596">
    <property type="component" value="Chromosome"/>
</dbReference>
<dbReference type="GO" id="GO:0005737">
    <property type="term" value="C:cytoplasm"/>
    <property type="evidence" value="ECO:0007669"/>
    <property type="project" value="TreeGrafter"/>
</dbReference>
<dbReference type="GO" id="GO:0000428">
    <property type="term" value="C:DNA-directed RNA polymerase complex"/>
    <property type="evidence" value="ECO:0007669"/>
    <property type="project" value="UniProtKB-KW"/>
</dbReference>
<dbReference type="GO" id="GO:1990077">
    <property type="term" value="C:primosome complex"/>
    <property type="evidence" value="ECO:0007669"/>
    <property type="project" value="UniProtKB-KW"/>
</dbReference>
<dbReference type="GO" id="GO:0005524">
    <property type="term" value="F:ATP binding"/>
    <property type="evidence" value="ECO:0007669"/>
    <property type="project" value="InterPro"/>
</dbReference>
<dbReference type="GO" id="GO:0003677">
    <property type="term" value="F:DNA binding"/>
    <property type="evidence" value="ECO:0007669"/>
    <property type="project" value="UniProtKB-KW"/>
</dbReference>
<dbReference type="GO" id="GO:0003678">
    <property type="term" value="F:DNA helicase activity"/>
    <property type="evidence" value="ECO:0007669"/>
    <property type="project" value="InterPro"/>
</dbReference>
<dbReference type="GO" id="GO:0003899">
    <property type="term" value="F:DNA-directed RNA polymerase activity"/>
    <property type="evidence" value="ECO:0007669"/>
    <property type="project" value="InterPro"/>
</dbReference>
<dbReference type="GO" id="GO:0008270">
    <property type="term" value="F:zinc ion binding"/>
    <property type="evidence" value="ECO:0007669"/>
    <property type="project" value="UniProtKB-UniRule"/>
</dbReference>
<dbReference type="GO" id="GO:0006269">
    <property type="term" value="P:DNA replication, synthesis of primer"/>
    <property type="evidence" value="ECO:0007669"/>
    <property type="project" value="UniProtKB-UniRule"/>
</dbReference>
<dbReference type="CDD" id="cd03364">
    <property type="entry name" value="TOPRIM_DnaG_primases"/>
    <property type="match status" value="1"/>
</dbReference>
<dbReference type="FunFam" id="3.90.580.10:FF:000001">
    <property type="entry name" value="DNA primase"/>
    <property type="match status" value="1"/>
</dbReference>
<dbReference type="FunFam" id="3.90.980.10:FF:000001">
    <property type="entry name" value="DNA primase"/>
    <property type="match status" value="1"/>
</dbReference>
<dbReference type="Gene3D" id="3.40.1360.10">
    <property type="match status" value="1"/>
</dbReference>
<dbReference type="Gene3D" id="3.90.980.10">
    <property type="entry name" value="DNA primase, catalytic core, N-terminal domain"/>
    <property type="match status" value="1"/>
</dbReference>
<dbReference type="Gene3D" id="1.10.860.10">
    <property type="entry name" value="DNAb Helicase, Chain A"/>
    <property type="match status" value="1"/>
</dbReference>
<dbReference type="Gene3D" id="1.20.50.20">
    <property type="entry name" value="DnaG, RNA polymerase domain, helical bundle"/>
    <property type="match status" value="1"/>
</dbReference>
<dbReference type="Gene3D" id="3.90.580.10">
    <property type="entry name" value="Zinc finger, CHC2-type domain"/>
    <property type="match status" value="1"/>
</dbReference>
<dbReference type="HAMAP" id="MF_00974">
    <property type="entry name" value="DNA_primase_DnaG"/>
    <property type="match status" value="1"/>
</dbReference>
<dbReference type="InterPro" id="IPR036185">
    <property type="entry name" value="DNA_heli_DnaB-like_N_sf"/>
</dbReference>
<dbReference type="InterPro" id="IPR007693">
    <property type="entry name" value="DNA_helicase_DnaB-like_N"/>
</dbReference>
<dbReference type="InterPro" id="IPR016136">
    <property type="entry name" value="DNA_helicase_N/primase_C"/>
</dbReference>
<dbReference type="InterPro" id="IPR037068">
    <property type="entry name" value="DNA_primase_core_N_sf"/>
</dbReference>
<dbReference type="InterPro" id="IPR006295">
    <property type="entry name" value="DNA_primase_DnaG"/>
</dbReference>
<dbReference type="InterPro" id="IPR036977">
    <property type="entry name" value="DNA_primase_Znf_CHC2"/>
</dbReference>
<dbReference type="InterPro" id="IPR030846">
    <property type="entry name" value="DnaG_bac"/>
</dbReference>
<dbReference type="InterPro" id="IPR048453">
    <property type="entry name" value="DnaG_cat_HB"/>
</dbReference>
<dbReference type="InterPro" id="IPR013264">
    <property type="entry name" value="DNAG_N"/>
</dbReference>
<dbReference type="InterPro" id="IPR050219">
    <property type="entry name" value="DnaG_primase"/>
</dbReference>
<dbReference type="InterPro" id="IPR034151">
    <property type="entry name" value="TOPRIM_DnaG_bac"/>
</dbReference>
<dbReference type="InterPro" id="IPR006171">
    <property type="entry name" value="TOPRIM_dom"/>
</dbReference>
<dbReference type="InterPro" id="IPR002694">
    <property type="entry name" value="Znf_CHC2"/>
</dbReference>
<dbReference type="NCBIfam" id="TIGR01391">
    <property type="entry name" value="dnaG"/>
    <property type="match status" value="1"/>
</dbReference>
<dbReference type="PANTHER" id="PTHR30313">
    <property type="entry name" value="DNA PRIMASE"/>
    <property type="match status" value="1"/>
</dbReference>
<dbReference type="PANTHER" id="PTHR30313:SF2">
    <property type="entry name" value="DNA PRIMASE"/>
    <property type="match status" value="1"/>
</dbReference>
<dbReference type="Pfam" id="PF00772">
    <property type="entry name" value="DnaB"/>
    <property type="match status" value="1"/>
</dbReference>
<dbReference type="Pfam" id="PF21650">
    <property type="entry name" value="DnaG_cat_HB"/>
    <property type="match status" value="1"/>
</dbReference>
<dbReference type="Pfam" id="PF08275">
    <property type="entry name" value="DNAG_N"/>
    <property type="match status" value="1"/>
</dbReference>
<dbReference type="Pfam" id="PF13155">
    <property type="entry name" value="Toprim_2"/>
    <property type="match status" value="1"/>
</dbReference>
<dbReference type="Pfam" id="PF01807">
    <property type="entry name" value="Zn_ribbon_DnaG"/>
    <property type="match status" value="1"/>
</dbReference>
<dbReference type="PIRSF" id="PIRSF002811">
    <property type="entry name" value="DnaG"/>
    <property type="match status" value="1"/>
</dbReference>
<dbReference type="SMART" id="SM00493">
    <property type="entry name" value="TOPRIM"/>
    <property type="match status" value="1"/>
</dbReference>
<dbReference type="SMART" id="SM00400">
    <property type="entry name" value="ZnF_CHCC"/>
    <property type="match status" value="1"/>
</dbReference>
<dbReference type="SUPFAM" id="SSF56731">
    <property type="entry name" value="DNA primase core"/>
    <property type="match status" value="1"/>
</dbReference>
<dbReference type="SUPFAM" id="SSF48024">
    <property type="entry name" value="N-terminal domain of DnaB helicase"/>
    <property type="match status" value="1"/>
</dbReference>
<dbReference type="SUPFAM" id="SSF57783">
    <property type="entry name" value="Zinc beta-ribbon"/>
    <property type="match status" value="1"/>
</dbReference>
<dbReference type="PROSITE" id="PS50880">
    <property type="entry name" value="TOPRIM"/>
    <property type="match status" value="1"/>
</dbReference>
<sequence>MRIDQSIINEIKDKTDILDLVSEYVKLEKRGRNYIGLCPFHDEKTPSFTVSEDKQICHCFGCKKGGNVFQFTQEIKDISFVEAVKELGDRVNVAVDIEATQSNSNVQIASDDLQMIEMHELIQEFYYYALTKTVEGEQALTYLQERGFTDALIKERGIGFAPDSSHFCHDFLQKKGYDIELAYEAGLLSRNEENFSYYDRFRNRIMFPLKNAQGRIVGYSGRTYTGQEPKYLNSPETPIFQKRKLLYNLDKARKSIRKLDEIVLLEGFMDVIKSDTAGLKNVVATMGTQLSDEHITFIRKLTSNITLMFDGDFAGSEATLKTGQHLLQQGLNVFVIQLPSGMDPDEYIGKYGNDAFTAFVKNDKKSFAHYKVSILKDEIAHNDLSYERYLKELSHDISLMKSSILQQKALNDVAPFFNVSPEQLANEIQFNQAPANYYPEDEYGGYIEPEPIGMAQFDNLSRQEKAERAFLKHLMRDKDTFLNYYESVDKDNFTNQHFKYVFEVLHDFYAENDQYNISDAVQYVNSNELRETLISLEQYSLNDEPYENEIDDYVNVINENGQETIESLNHKLREATRIGDVELQKYYLQQIVAKNKERM</sequence>
<accession>Q6GGD7</accession>
<protein>
    <recommendedName>
        <fullName evidence="1">DNA primase</fullName>
        <ecNumber evidence="1">2.7.7.101</ecNumber>
    </recommendedName>
</protein>
<organism>
    <name type="scientific">Staphylococcus aureus (strain MRSA252)</name>
    <dbReference type="NCBI Taxonomy" id="282458"/>
    <lineage>
        <taxon>Bacteria</taxon>
        <taxon>Bacillati</taxon>
        <taxon>Bacillota</taxon>
        <taxon>Bacilli</taxon>
        <taxon>Bacillales</taxon>
        <taxon>Staphylococcaceae</taxon>
        <taxon>Staphylococcus</taxon>
    </lineage>
</organism>
<proteinExistence type="inferred from homology"/>
<name>DNAG_STAAR</name>
<reference key="1">
    <citation type="journal article" date="2004" name="Proc. Natl. Acad. Sci. U.S.A.">
        <title>Complete genomes of two clinical Staphylococcus aureus strains: evidence for the rapid evolution of virulence and drug resistance.</title>
        <authorList>
            <person name="Holden M.T.G."/>
            <person name="Feil E.J."/>
            <person name="Lindsay J.A."/>
            <person name="Peacock S.J."/>
            <person name="Day N.P.J."/>
            <person name="Enright M.C."/>
            <person name="Foster T.J."/>
            <person name="Moore C.E."/>
            <person name="Hurst L."/>
            <person name="Atkin R."/>
            <person name="Barron A."/>
            <person name="Bason N."/>
            <person name="Bentley S.D."/>
            <person name="Chillingworth C."/>
            <person name="Chillingworth T."/>
            <person name="Churcher C."/>
            <person name="Clark L."/>
            <person name="Corton C."/>
            <person name="Cronin A."/>
            <person name="Doggett J."/>
            <person name="Dowd L."/>
            <person name="Feltwell T."/>
            <person name="Hance Z."/>
            <person name="Harris B."/>
            <person name="Hauser H."/>
            <person name="Holroyd S."/>
            <person name="Jagels K."/>
            <person name="James K.D."/>
            <person name="Lennard N."/>
            <person name="Line A."/>
            <person name="Mayes R."/>
            <person name="Moule S."/>
            <person name="Mungall K."/>
            <person name="Ormond D."/>
            <person name="Quail M.A."/>
            <person name="Rabbinowitsch E."/>
            <person name="Rutherford K.M."/>
            <person name="Sanders M."/>
            <person name="Sharp S."/>
            <person name="Simmonds M."/>
            <person name="Stevens K."/>
            <person name="Whitehead S."/>
            <person name="Barrell B.G."/>
            <person name="Spratt B.G."/>
            <person name="Parkhill J."/>
        </authorList>
    </citation>
    <scope>NUCLEOTIDE SEQUENCE [LARGE SCALE GENOMIC DNA]</scope>
    <source>
        <strain>MRSA252</strain>
    </source>
</reference>
<feature type="chain" id="PRO_0000180521" description="DNA primase">
    <location>
        <begin position="1"/>
        <end position="599"/>
    </location>
</feature>
<feature type="domain" description="Toprim" evidence="1">
    <location>
        <begin position="260"/>
        <end position="341"/>
    </location>
</feature>
<feature type="zinc finger region" description="CHC2-type" evidence="1">
    <location>
        <begin position="38"/>
        <end position="62"/>
    </location>
</feature>
<feature type="binding site" evidence="1">
    <location>
        <position position="266"/>
    </location>
    <ligand>
        <name>Mg(2+)</name>
        <dbReference type="ChEBI" id="CHEBI:18420"/>
        <label>1</label>
        <note>catalytic</note>
    </ligand>
</feature>
<feature type="binding site" evidence="1">
    <location>
        <position position="310"/>
    </location>
    <ligand>
        <name>Mg(2+)</name>
        <dbReference type="ChEBI" id="CHEBI:18420"/>
        <label>1</label>
        <note>catalytic</note>
    </ligand>
</feature>
<feature type="binding site" evidence="1">
    <location>
        <position position="310"/>
    </location>
    <ligand>
        <name>Mg(2+)</name>
        <dbReference type="ChEBI" id="CHEBI:18420"/>
        <label>2</label>
    </ligand>
</feature>
<feature type="binding site" evidence="1">
    <location>
        <position position="312"/>
    </location>
    <ligand>
        <name>Mg(2+)</name>
        <dbReference type="ChEBI" id="CHEBI:18420"/>
        <label>2</label>
    </ligand>
</feature>
<keyword id="KW-0235">DNA replication</keyword>
<keyword id="KW-0238">DNA-binding</keyword>
<keyword id="KW-0240">DNA-directed RNA polymerase</keyword>
<keyword id="KW-0460">Magnesium</keyword>
<keyword id="KW-0479">Metal-binding</keyword>
<keyword id="KW-0548">Nucleotidyltransferase</keyword>
<keyword id="KW-0639">Primosome</keyword>
<keyword id="KW-0804">Transcription</keyword>
<keyword id="KW-0808">Transferase</keyword>
<keyword id="KW-0862">Zinc</keyword>
<keyword id="KW-0863">Zinc-finger</keyword>
<evidence type="ECO:0000255" key="1">
    <source>
        <dbReference type="HAMAP-Rule" id="MF_00974"/>
    </source>
</evidence>
<gene>
    <name evidence="1" type="primary">dnaG</name>
    <name type="ordered locus">SAR1639</name>
</gene>
<comment type="function">
    <text evidence="1">RNA polymerase that catalyzes the synthesis of short RNA molecules used as primers for DNA polymerase during DNA replication.</text>
</comment>
<comment type="catalytic activity">
    <reaction evidence="1">
        <text>ssDNA + n NTP = ssDNA/pppN(pN)n-1 hybrid + (n-1) diphosphate.</text>
        <dbReference type="EC" id="2.7.7.101"/>
    </reaction>
</comment>
<comment type="cofactor">
    <cofactor evidence="1">
        <name>Zn(2+)</name>
        <dbReference type="ChEBI" id="CHEBI:29105"/>
    </cofactor>
    <text evidence="1">Binds 1 zinc ion per monomer.</text>
</comment>
<comment type="cofactor">
    <cofactor evidence="1">
        <name>Mg(2+)</name>
        <dbReference type="ChEBI" id="CHEBI:18420"/>
    </cofactor>
    <text evidence="1">Binds two Mg(2+) per subunit.</text>
</comment>
<comment type="subunit">
    <text evidence="1">Monomer. Interacts with DnaB.</text>
</comment>
<comment type="domain">
    <text evidence="1">Contains an N-terminal zinc-binding domain, a central core domain that contains the primase activity, and a C-terminal DnaB-binding domain.</text>
</comment>
<comment type="similarity">
    <text evidence="1">Belongs to the DnaG primase family.</text>
</comment>